<feature type="chain" id="PRO_0000125401" description="Kinesin-II 85 kDa subunit">
    <location>
        <begin position="1"/>
        <end position="699"/>
    </location>
</feature>
<feature type="domain" description="Kinesin motor" evidence="3">
    <location>
        <begin position="10"/>
        <end position="342"/>
    </location>
</feature>
<feature type="region of interest" description="Disordered" evidence="4">
    <location>
        <begin position="369"/>
        <end position="415"/>
    </location>
</feature>
<feature type="region of interest" description="Disordered" evidence="4">
    <location>
        <begin position="432"/>
        <end position="456"/>
    </location>
</feature>
<feature type="region of interest" description="Globular" evidence="1">
    <location>
        <begin position="620"/>
        <end position="699"/>
    </location>
</feature>
<feature type="region of interest" description="Disordered" evidence="4">
    <location>
        <begin position="660"/>
        <end position="699"/>
    </location>
</feature>
<feature type="coiled-coil region" evidence="2">
    <location>
        <begin position="341"/>
        <end position="619"/>
    </location>
</feature>
<feature type="compositionally biased region" description="Acidic residues" evidence="4">
    <location>
        <begin position="376"/>
        <end position="395"/>
    </location>
</feature>
<feature type="compositionally biased region" description="Basic residues" evidence="4">
    <location>
        <begin position="400"/>
        <end position="411"/>
    </location>
</feature>
<feature type="compositionally biased region" description="Polar residues" evidence="4">
    <location>
        <begin position="667"/>
        <end position="679"/>
    </location>
</feature>
<feature type="binding site" evidence="3">
    <location>
        <begin position="97"/>
        <end position="104"/>
    </location>
    <ligand>
        <name>ATP</name>
        <dbReference type="ChEBI" id="CHEBI:30616"/>
    </ligand>
</feature>
<proteinExistence type="evidence at protein level"/>
<sequence>MPGGSSGNDNVRVVVRCRPLNSKETGQGFKSVVKMDEMRGTVQVTNPNAPSGEPPKSFTFDTVFAPGAKQTDVYNQTARPIVDAIIEGYNGTIFAYGQTGTGKTFTMEGVRSQPELRGIIPNSFAHIFGHIAKEQENVRFLVRVSYLEIYNEEVKDLLGKDQQHRLEVKERPDVGVYVKDLSAFVVNNADDMDRIMTLGNKNRSVGATNMNESSSRSHAIFTITLERSDMGLDKEQHVRVGKLHMVDLAGSERQTKTGATGQRLKEATKINLSLSTLGNVISSLVDGKSTHIPYRNSKLTRLLQDSLGGNAKTVMCANIGPAEYNYDETISTLRYANRAKNIKNKAKINEDPKDALLREFQKEIEELKKQISESGEGLDDDEESGSEESGDEEAGEGGVKKKRKGKNPKRKLSPEIMAAMQKKIDEEKKALEEKKDMVEEDRNTVHRELQRRESELHKAQDDQKILNEKLNAIQKKLIVGGVDLLAKSEEQEQLLEQSALEMKERMAKQESMRKMMEEREQERMDIEEKYSSLQDEAHGKTKKLKKVWTMLMQAKSEVADMQAEHQREMEALLENVRELSRELRLSMLIIDSFIPQEFQEMIEQYVHWNEDIGEWQLKCVAYTGNNMRKQTPVADKDKSLAYGEADLSNVFLTYNLEGGGMKYKPSQGKSGRPKTSSGRPKTGKKKQASMASSIDALLQ</sequence>
<reference key="1">
    <citation type="journal article" date="1993" name="Nature">
        <title>Novel heterotrimeric kinesin-related protein purified from sea urchin eggs.</title>
        <authorList>
            <person name="Cole D.G."/>
            <person name="Chinn S.W."/>
            <person name="Wedaman K.P."/>
            <person name="Hall K."/>
            <person name="Vuong T."/>
            <person name="Scholey J.M."/>
        </authorList>
    </citation>
    <scope>NUCLEOTIDE SEQUENCE [MRNA]</scope>
    <scope>PARTIAL PROTEIN SEQUENCE</scope>
    <source>
        <tissue>Egg</tissue>
    </source>
</reference>
<accession>P46872</accession>
<comment type="subunit">
    <text>Heterotrimer of a 115 kDa subunit (KAP115) and two kinesin-like subunits of 95 kDa (KRP95) and 85 kDa (KRP85).</text>
</comment>
<comment type="subcellular location">
    <subcellularLocation>
        <location evidence="5">Cytoplasm</location>
        <location evidence="5">Cytoskeleton</location>
    </subcellularLocation>
</comment>
<comment type="PTM">
    <text>The N-terminus is blocked.</text>
</comment>
<comment type="similarity">
    <text evidence="3">Belongs to the TRAFAC class myosin-kinesin ATPase superfamily. Kinesin family. Kinesin II subfamily.</text>
</comment>
<evidence type="ECO:0000250" key="1"/>
<evidence type="ECO:0000255" key="2"/>
<evidence type="ECO:0000255" key="3">
    <source>
        <dbReference type="PROSITE-ProRule" id="PRU00283"/>
    </source>
</evidence>
<evidence type="ECO:0000256" key="4">
    <source>
        <dbReference type="SAM" id="MobiDB-lite"/>
    </source>
</evidence>
<evidence type="ECO:0000305" key="5"/>
<name>KRP85_STRPU</name>
<keyword id="KW-0067">ATP-binding</keyword>
<keyword id="KW-0175">Coiled coil</keyword>
<keyword id="KW-0963">Cytoplasm</keyword>
<keyword id="KW-0206">Cytoskeleton</keyword>
<keyword id="KW-0903">Direct protein sequencing</keyword>
<keyword id="KW-0493">Microtubule</keyword>
<keyword id="KW-0505">Motor protein</keyword>
<keyword id="KW-0547">Nucleotide-binding</keyword>
<keyword id="KW-1185">Reference proteome</keyword>
<organism>
    <name type="scientific">Strongylocentrotus purpuratus</name>
    <name type="common">Purple sea urchin</name>
    <dbReference type="NCBI Taxonomy" id="7668"/>
    <lineage>
        <taxon>Eukaryota</taxon>
        <taxon>Metazoa</taxon>
        <taxon>Echinodermata</taxon>
        <taxon>Eleutherozoa</taxon>
        <taxon>Echinozoa</taxon>
        <taxon>Echinoidea</taxon>
        <taxon>Euechinoidea</taxon>
        <taxon>Echinacea</taxon>
        <taxon>Camarodonta</taxon>
        <taxon>Echinidea</taxon>
        <taxon>Strongylocentrotidae</taxon>
        <taxon>Strongylocentrotus</taxon>
    </lineage>
</organism>
<gene>
    <name type="primary">KRP85</name>
</gene>
<dbReference type="EMBL" id="L16993">
    <property type="protein sequence ID" value="AAA16098.1"/>
    <property type="molecule type" value="mRNA"/>
</dbReference>
<dbReference type="PIR" id="S38982">
    <property type="entry name" value="S38982"/>
</dbReference>
<dbReference type="RefSeq" id="NP_999777.1">
    <property type="nucleotide sequence ID" value="NM_214612.1"/>
</dbReference>
<dbReference type="SMR" id="P46872"/>
<dbReference type="STRING" id="7668.P46872"/>
<dbReference type="EnsemblMetazoa" id="NM_214612">
    <property type="protein sequence ID" value="NP_999777"/>
    <property type="gene ID" value="GeneID_373466"/>
</dbReference>
<dbReference type="GeneID" id="373466"/>
<dbReference type="KEGG" id="spu:373466"/>
<dbReference type="CTD" id="373466"/>
<dbReference type="eggNOG" id="KOG4280">
    <property type="taxonomic scope" value="Eukaryota"/>
</dbReference>
<dbReference type="InParanoid" id="P46872"/>
<dbReference type="OMA" id="NTVPNFN"/>
<dbReference type="OrthoDB" id="3176171at2759"/>
<dbReference type="PhylomeDB" id="P46872"/>
<dbReference type="Proteomes" id="UP000007110">
    <property type="component" value="Unassembled WGS sequence"/>
</dbReference>
<dbReference type="GO" id="GO:1904115">
    <property type="term" value="C:axon cytoplasm"/>
    <property type="evidence" value="ECO:0007669"/>
    <property type="project" value="GOC"/>
</dbReference>
<dbReference type="GO" id="GO:0005737">
    <property type="term" value="C:cytoplasm"/>
    <property type="evidence" value="ECO:0000318"/>
    <property type="project" value="GO_Central"/>
</dbReference>
<dbReference type="GO" id="GO:0005871">
    <property type="term" value="C:kinesin complex"/>
    <property type="evidence" value="ECO:0000318"/>
    <property type="project" value="GO_Central"/>
</dbReference>
<dbReference type="GO" id="GO:0005874">
    <property type="term" value="C:microtubule"/>
    <property type="evidence" value="ECO:0000318"/>
    <property type="project" value="GO_Central"/>
</dbReference>
<dbReference type="GO" id="GO:0005524">
    <property type="term" value="F:ATP binding"/>
    <property type="evidence" value="ECO:0007669"/>
    <property type="project" value="UniProtKB-KW"/>
</dbReference>
<dbReference type="GO" id="GO:0016887">
    <property type="term" value="F:ATP hydrolysis activity"/>
    <property type="evidence" value="ECO:0000318"/>
    <property type="project" value="GO_Central"/>
</dbReference>
<dbReference type="GO" id="GO:0008017">
    <property type="term" value="F:microtubule binding"/>
    <property type="evidence" value="ECO:0000318"/>
    <property type="project" value="GO_Central"/>
</dbReference>
<dbReference type="GO" id="GO:0003777">
    <property type="term" value="F:microtubule motor activity"/>
    <property type="evidence" value="ECO:0000318"/>
    <property type="project" value="GO_Central"/>
</dbReference>
<dbReference type="GO" id="GO:0008089">
    <property type="term" value="P:anterograde axonal transport"/>
    <property type="evidence" value="ECO:0000318"/>
    <property type="project" value="GO_Central"/>
</dbReference>
<dbReference type="GO" id="GO:0060271">
    <property type="term" value="P:cilium assembly"/>
    <property type="evidence" value="ECO:0000318"/>
    <property type="project" value="GO_Central"/>
</dbReference>
<dbReference type="CDD" id="cd01371">
    <property type="entry name" value="KISc_KIF3"/>
    <property type="match status" value="1"/>
</dbReference>
<dbReference type="FunFam" id="3.40.850.10:FF:000028">
    <property type="entry name" value="Kinesin-like protein"/>
    <property type="match status" value="1"/>
</dbReference>
<dbReference type="Gene3D" id="3.40.850.10">
    <property type="entry name" value="Kinesin motor domain"/>
    <property type="match status" value="1"/>
</dbReference>
<dbReference type="InterPro" id="IPR027640">
    <property type="entry name" value="Kinesin-like_fam"/>
</dbReference>
<dbReference type="InterPro" id="IPR019821">
    <property type="entry name" value="Kinesin_motor_CS"/>
</dbReference>
<dbReference type="InterPro" id="IPR001752">
    <property type="entry name" value="Kinesin_motor_dom"/>
</dbReference>
<dbReference type="InterPro" id="IPR036961">
    <property type="entry name" value="Kinesin_motor_dom_sf"/>
</dbReference>
<dbReference type="InterPro" id="IPR027417">
    <property type="entry name" value="P-loop_NTPase"/>
</dbReference>
<dbReference type="PANTHER" id="PTHR47968">
    <property type="entry name" value="CENTROMERE PROTEIN E"/>
    <property type="match status" value="1"/>
</dbReference>
<dbReference type="PANTHER" id="PTHR47968:SF50">
    <property type="entry name" value="KINESIN-LIKE PROTEIN"/>
    <property type="match status" value="1"/>
</dbReference>
<dbReference type="Pfam" id="PF00225">
    <property type="entry name" value="Kinesin"/>
    <property type="match status" value="1"/>
</dbReference>
<dbReference type="PRINTS" id="PR00380">
    <property type="entry name" value="KINESINHEAVY"/>
</dbReference>
<dbReference type="SMART" id="SM00129">
    <property type="entry name" value="KISc"/>
    <property type="match status" value="1"/>
</dbReference>
<dbReference type="SUPFAM" id="SSF52540">
    <property type="entry name" value="P-loop containing nucleoside triphosphate hydrolases"/>
    <property type="match status" value="1"/>
</dbReference>
<dbReference type="PROSITE" id="PS00411">
    <property type="entry name" value="KINESIN_MOTOR_1"/>
    <property type="match status" value="1"/>
</dbReference>
<dbReference type="PROSITE" id="PS50067">
    <property type="entry name" value="KINESIN_MOTOR_2"/>
    <property type="match status" value="1"/>
</dbReference>
<protein>
    <recommendedName>
        <fullName>Kinesin-II 85 kDa subunit</fullName>
    </recommendedName>
    <alternativeName>
        <fullName>KRP-85/95 85 kDa subunit</fullName>
    </alternativeName>
</protein>